<name>NHAA_YERPS</name>
<comment type="function">
    <text evidence="1">Na(+)/H(+) antiporter that extrudes sodium in exchange for external protons.</text>
</comment>
<comment type="catalytic activity">
    <reaction evidence="1">
        <text>Na(+)(in) + 2 H(+)(out) = Na(+)(out) + 2 H(+)(in)</text>
        <dbReference type="Rhea" id="RHEA:29251"/>
        <dbReference type="ChEBI" id="CHEBI:15378"/>
        <dbReference type="ChEBI" id="CHEBI:29101"/>
    </reaction>
    <physiologicalReaction direction="left-to-right" evidence="1">
        <dbReference type="Rhea" id="RHEA:29252"/>
    </physiologicalReaction>
</comment>
<comment type="subcellular location">
    <subcellularLocation>
        <location evidence="1">Cell inner membrane</location>
        <topology evidence="1">Multi-pass membrane protein</topology>
    </subcellularLocation>
</comment>
<comment type="similarity">
    <text evidence="1">Belongs to the NhaA Na(+)/H(+) (TC 2.A.33) antiporter family.</text>
</comment>
<evidence type="ECO:0000255" key="1">
    <source>
        <dbReference type="HAMAP-Rule" id="MF_01844"/>
    </source>
</evidence>
<sequence>MTNIIRQFLRQEAAGGLILIIAAAIALLMANSALQGVYQSFLDIPVSIKIASLDISKPLLLWINDGLMAVFFLMVGLEVKRELMEGSLAGRDKAVFPAIAALGGMLAPALIYLLFNGADEVTRQGWAIPAATDIAFALGVMALLGNRVPTGLKVFLLALAIIDDLGVIIIIALFYTQQVSLQSLGIAAAAIALLAYMNWRGVGKTSAYLLVGLVLWVCILKSGVHATLAGVIVGFMIPLHTQDQRSPSESLEHGLHPWVAYLILPLFAFANAGVSLQGVSLSGLTSLLPMGIATGLFIGKPLGIFTFSWLAVKLGIAKLPDAINFKQIFAVSVLCGIGFTMSIFIASLAFEGTDIALTTYSKLGILLGSTTAAVVGYSLLRLVLPARRKAVNVR</sequence>
<reference key="1">
    <citation type="journal article" date="2004" name="Proc. Natl. Acad. Sci. U.S.A.">
        <title>Insights into the evolution of Yersinia pestis through whole-genome comparison with Yersinia pseudotuberculosis.</title>
        <authorList>
            <person name="Chain P.S.G."/>
            <person name="Carniel E."/>
            <person name="Larimer F.W."/>
            <person name="Lamerdin J."/>
            <person name="Stoutland P.O."/>
            <person name="Regala W.M."/>
            <person name="Georgescu A.M."/>
            <person name="Vergez L.M."/>
            <person name="Land M.L."/>
            <person name="Motin V.L."/>
            <person name="Brubaker R.R."/>
            <person name="Fowler J."/>
            <person name="Hinnebusch J."/>
            <person name="Marceau M."/>
            <person name="Medigue C."/>
            <person name="Simonet M."/>
            <person name="Chenal-Francisque V."/>
            <person name="Souza B."/>
            <person name="Dacheux D."/>
            <person name="Elliott J.M."/>
            <person name="Derbise A."/>
            <person name="Hauser L.J."/>
            <person name="Garcia E."/>
        </authorList>
    </citation>
    <scope>NUCLEOTIDE SEQUENCE [LARGE SCALE GENOMIC DNA]</scope>
    <source>
        <strain>IP32953</strain>
    </source>
</reference>
<organism>
    <name type="scientific">Yersinia pseudotuberculosis serotype I (strain IP32953)</name>
    <dbReference type="NCBI Taxonomy" id="273123"/>
    <lineage>
        <taxon>Bacteria</taxon>
        <taxon>Pseudomonadati</taxon>
        <taxon>Pseudomonadota</taxon>
        <taxon>Gammaproteobacteria</taxon>
        <taxon>Enterobacterales</taxon>
        <taxon>Yersiniaceae</taxon>
        <taxon>Yersinia</taxon>
    </lineage>
</organism>
<protein>
    <recommendedName>
        <fullName evidence="1">Na(+)/H(+) antiporter NhaA</fullName>
    </recommendedName>
    <alternativeName>
        <fullName evidence="1">Sodium/proton antiporter NhaA</fullName>
    </alternativeName>
</protein>
<feature type="chain" id="PRO_0000334471" description="Na(+)/H(+) antiporter NhaA">
    <location>
        <begin position="1"/>
        <end position="394"/>
    </location>
</feature>
<feature type="transmembrane region" description="Helical" evidence="1">
    <location>
        <begin position="14"/>
        <end position="34"/>
    </location>
</feature>
<feature type="transmembrane region" description="Helical" evidence="1">
    <location>
        <begin position="59"/>
        <end position="79"/>
    </location>
</feature>
<feature type="transmembrane region" description="Helical" evidence="1">
    <location>
        <begin position="95"/>
        <end position="115"/>
    </location>
</feature>
<feature type="transmembrane region" description="Helical" evidence="1">
    <location>
        <begin position="125"/>
        <end position="145"/>
    </location>
</feature>
<feature type="transmembrane region" description="Helical" evidence="1">
    <location>
        <begin position="154"/>
        <end position="174"/>
    </location>
</feature>
<feature type="transmembrane region" description="Helical" evidence="1">
    <location>
        <begin position="179"/>
        <end position="199"/>
    </location>
</feature>
<feature type="transmembrane region" description="Helical" evidence="1">
    <location>
        <begin position="213"/>
        <end position="233"/>
    </location>
</feature>
<feature type="transmembrane region" description="Helical" evidence="1">
    <location>
        <begin position="254"/>
        <end position="274"/>
    </location>
</feature>
<feature type="transmembrane region" description="Helical" evidence="1">
    <location>
        <begin position="292"/>
        <end position="312"/>
    </location>
</feature>
<feature type="transmembrane region" description="Helical" evidence="1">
    <location>
        <begin position="328"/>
        <end position="348"/>
    </location>
</feature>
<feature type="transmembrane region" description="Helical" evidence="1">
    <location>
        <begin position="363"/>
        <end position="383"/>
    </location>
</feature>
<dbReference type="EMBL" id="BX936398">
    <property type="protein sequence ID" value="CAH19853.1"/>
    <property type="molecule type" value="Genomic_DNA"/>
</dbReference>
<dbReference type="RefSeq" id="WP_011191700.1">
    <property type="nucleotide sequence ID" value="NC_006155.1"/>
</dbReference>
<dbReference type="SMR" id="Q66ES8"/>
<dbReference type="GeneID" id="49787385"/>
<dbReference type="KEGG" id="ypo:BZ17_1943"/>
<dbReference type="KEGG" id="yps:YPTB0613"/>
<dbReference type="PATRIC" id="fig|273123.14.peg.2066"/>
<dbReference type="Proteomes" id="UP000001011">
    <property type="component" value="Chromosome"/>
</dbReference>
<dbReference type="GO" id="GO:0005886">
    <property type="term" value="C:plasma membrane"/>
    <property type="evidence" value="ECO:0007669"/>
    <property type="project" value="UniProtKB-SubCell"/>
</dbReference>
<dbReference type="GO" id="GO:0015385">
    <property type="term" value="F:sodium:proton antiporter activity"/>
    <property type="evidence" value="ECO:0007669"/>
    <property type="project" value="TreeGrafter"/>
</dbReference>
<dbReference type="GO" id="GO:0006885">
    <property type="term" value="P:regulation of pH"/>
    <property type="evidence" value="ECO:0007669"/>
    <property type="project" value="InterPro"/>
</dbReference>
<dbReference type="Gene3D" id="1.20.1530.10">
    <property type="entry name" value="Na+/H+ antiporter like domain"/>
    <property type="match status" value="1"/>
</dbReference>
<dbReference type="HAMAP" id="MF_01844">
    <property type="entry name" value="NhaA"/>
    <property type="match status" value="1"/>
</dbReference>
<dbReference type="InterPro" id="IPR023171">
    <property type="entry name" value="Na/H_antiporter_dom_sf"/>
</dbReference>
<dbReference type="InterPro" id="IPR004670">
    <property type="entry name" value="NhaA"/>
</dbReference>
<dbReference type="NCBIfam" id="TIGR00773">
    <property type="entry name" value="NhaA"/>
    <property type="match status" value="1"/>
</dbReference>
<dbReference type="NCBIfam" id="NF007111">
    <property type="entry name" value="PRK09560.1"/>
    <property type="match status" value="1"/>
</dbReference>
<dbReference type="NCBIfam" id="NF007112">
    <property type="entry name" value="PRK09561.1"/>
    <property type="match status" value="1"/>
</dbReference>
<dbReference type="PANTHER" id="PTHR30341:SF0">
    <property type="entry name" value="NA(+)_H(+) ANTIPORTER NHAA"/>
    <property type="match status" value="1"/>
</dbReference>
<dbReference type="PANTHER" id="PTHR30341">
    <property type="entry name" value="SODIUM ION/PROTON ANTIPORTER NHAA-RELATED"/>
    <property type="match status" value="1"/>
</dbReference>
<dbReference type="Pfam" id="PF06965">
    <property type="entry name" value="Na_H_antiport_1"/>
    <property type="match status" value="1"/>
</dbReference>
<proteinExistence type="inferred from homology"/>
<accession>Q66ES8</accession>
<keyword id="KW-0050">Antiport</keyword>
<keyword id="KW-0997">Cell inner membrane</keyword>
<keyword id="KW-1003">Cell membrane</keyword>
<keyword id="KW-0406">Ion transport</keyword>
<keyword id="KW-0472">Membrane</keyword>
<keyword id="KW-0915">Sodium</keyword>
<keyword id="KW-0739">Sodium transport</keyword>
<keyword id="KW-0812">Transmembrane</keyword>
<keyword id="KW-1133">Transmembrane helix</keyword>
<keyword id="KW-0813">Transport</keyword>
<gene>
    <name evidence="1" type="primary">nhaA</name>
    <name type="ordered locus">YPTB0613</name>
</gene>